<organism>
    <name type="scientific">Human cytomegalovirus (strain AD169)</name>
    <name type="common">HHV-5</name>
    <name type="synonym">Human herpesvirus 5</name>
    <dbReference type="NCBI Taxonomy" id="10360"/>
    <lineage>
        <taxon>Viruses</taxon>
        <taxon>Duplodnaviria</taxon>
        <taxon>Heunggongvirae</taxon>
        <taxon>Peploviricota</taxon>
        <taxon>Herviviricetes</taxon>
        <taxon>Herpesvirales</taxon>
        <taxon>Orthoherpesviridae</taxon>
        <taxon>Betaherpesvirinae</taxon>
        <taxon>Cytomegalovirus</taxon>
        <taxon>Cytomegalovirus humanbeta5</taxon>
        <taxon>Human cytomegalovirus</taxon>
    </lineage>
</organism>
<evidence type="ECO:0000255" key="1"/>
<evidence type="ECO:0000256" key="2">
    <source>
        <dbReference type="SAM" id="MobiDB-lite"/>
    </source>
</evidence>
<evidence type="ECO:0000305" key="3"/>
<gene>
    <name type="primary">UL124</name>
</gene>
<comment type="subcellular location">
    <subcellularLocation>
        <location evidence="3">Host membrane</location>
        <topology evidence="3">Single-pass membrane protein</topology>
    </subcellularLocation>
</comment>
<comment type="similarity">
    <text evidence="3">Belongs to the HHV-5 UL124 protein family.</text>
</comment>
<name>UL124_HCMVA</name>
<keyword id="KW-1043">Host membrane</keyword>
<keyword id="KW-0472">Membrane</keyword>
<keyword id="KW-1185">Reference proteome</keyword>
<keyword id="KW-0732">Signal</keyword>
<keyword id="KW-0812">Transmembrane</keyword>
<keyword id="KW-1133">Transmembrane helix</keyword>
<accession>P16742</accession>
<accession>Q7M6S3</accession>
<proteinExistence type="inferred from homology"/>
<reference key="1">
    <citation type="journal article" date="1990" name="Curr. Top. Microbiol. Immunol.">
        <title>Analysis of the protein-coding content of the sequence of human cytomegalovirus strain AD169.</title>
        <authorList>
            <person name="Chee M.S."/>
            <person name="Bankier A.T."/>
            <person name="Beck S."/>
            <person name="Bohni R."/>
            <person name="Brown C.M."/>
            <person name="Cerny R."/>
            <person name="Horsnell T."/>
            <person name="Hutchison C.A. III"/>
            <person name="Kouzarides T."/>
            <person name="Martignetti J.A."/>
            <person name="Preddie E."/>
            <person name="Satchwell S.C."/>
            <person name="Tomlinson P."/>
            <person name="Weston K.M."/>
            <person name="Barrell B.G."/>
        </authorList>
    </citation>
    <scope>NUCLEOTIDE SEQUENCE [LARGE SCALE GENOMIC DNA]</scope>
</reference>
<reference key="2">
    <citation type="journal article" date="2003" name="J. Gen. Virol.">
        <title>The human cytomegalovirus genome revisited: comparison with the chimpanzee cytomegalovirus genome.</title>
        <authorList>
            <person name="Davison A.J."/>
            <person name="Dolan A."/>
            <person name="Akter P."/>
            <person name="Addison C."/>
            <person name="Dargan D.J."/>
            <person name="Alcendor D.J."/>
            <person name="McGeoch D.J."/>
            <person name="Hayward G.S."/>
        </authorList>
    </citation>
    <scope>GENOME REANNOTATION</scope>
</reference>
<reference key="3">
    <citation type="journal article" date="2003" name="J. Gen. Virol.">
        <authorList>
            <person name="Davison A.J."/>
            <person name="Dolan A."/>
            <person name="Akter P."/>
            <person name="Addison C."/>
            <person name="Dargan D.J."/>
            <person name="Alcendor D.J."/>
            <person name="McGeoch D.J."/>
            <person name="Hayward G.S."/>
        </authorList>
    </citation>
    <scope>ERRATUM OF PUBMED:12533697</scope>
</reference>
<dbReference type="EMBL" id="X17403">
    <property type="protein sequence ID" value="CAA35326.1"/>
    <property type="molecule type" value="Genomic_DNA"/>
</dbReference>
<dbReference type="EMBL" id="BK000394">
    <property type="protein sequence ID" value="DAA00113.1"/>
    <property type="molecule type" value="Genomic_DNA"/>
</dbReference>
<dbReference type="PIR" id="S09891">
    <property type="entry name" value="S09891"/>
</dbReference>
<dbReference type="Proteomes" id="UP000008991">
    <property type="component" value="Segment"/>
</dbReference>
<dbReference type="Proteomes" id="UP000008992">
    <property type="component" value="Segment"/>
</dbReference>
<dbReference type="GO" id="GO:0033644">
    <property type="term" value="C:host cell membrane"/>
    <property type="evidence" value="ECO:0007669"/>
    <property type="project" value="UniProtKB-SubCell"/>
</dbReference>
<dbReference type="GO" id="GO:0016020">
    <property type="term" value="C:membrane"/>
    <property type="evidence" value="ECO:0007669"/>
    <property type="project" value="UniProtKB-KW"/>
</dbReference>
<dbReference type="InterPro" id="IPR020214">
    <property type="entry name" value="Cytomega_UL124"/>
</dbReference>
<dbReference type="Pfam" id="PF17609">
    <property type="entry name" value="HCMV_UL124"/>
    <property type="match status" value="1"/>
</dbReference>
<sequence>MERNSLLVCQLLCLVARAAATSTAQTTLPSTVNSTATGVTSDSYQNTTTQLPASSSAAALSLPNASAVQARSPSSFSDTYPTATALCGTLVVVGIVLCLSLASTVRSKELPSDHESLEAWEQGSDVEAPPLPEKSPCPEHVPEIRVEIPRYV</sequence>
<organismHost>
    <name type="scientific">Homo sapiens</name>
    <name type="common">Human</name>
    <dbReference type="NCBI Taxonomy" id="9606"/>
</organismHost>
<protein>
    <recommendedName>
        <fullName>Uncharacterized protein UL124</fullName>
    </recommendedName>
</protein>
<feature type="signal peptide" evidence="1">
    <location>
        <begin position="1"/>
        <end position="20"/>
    </location>
</feature>
<feature type="chain" id="PRO_0000115359" description="Uncharacterized protein UL124">
    <location>
        <begin position="21"/>
        <end position="152"/>
    </location>
</feature>
<feature type="transmembrane region" description="Helical" evidence="1">
    <location>
        <begin position="85"/>
        <end position="105"/>
    </location>
</feature>
<feature type="region of interest" description="Disordered" evidence="2">
    <location>
        <begin position="26"/>
        <end position="47"/>
    </location>
</feature>
<feature type="region of interest" description="Disordered" evidence="2">
    <location>
        <begin position="110"/>
        <end position="140"/>
    </location>
</feature>
<feature type="compositionally biased region" description="Polar residues" evidence="2">
    <location>
        <begin position="32"/>
        <end position="47"/>
    </location>
</feature>